<feature type="chain" id="PRO_0000082314" description="Taste receptor type 2 member 40">
    <location>
        <begin position="1"/>
        <end position="319"/>
    </location>
</feature>
<feature type="topological domain" description="Extracellular" evidence="2">
    <location>
        <begin position="1"/>
        <end position="17"/>
    </location>
</feature>
<feature type="transmembrane region" description="Helical; Name=1" evidence="2">
    <location>
        <begin position="18"/>
        <end position="38"/>
    </location>
</feature>
<feature type="topological domain" description="Cytoplasmic" evidence="2">
    <location>
        <begin position="39"/>
        <end position="66"/>
    </location>
</feature>
<feature type="transmembrane region" description="Helical; Name=2" evidence="2">
    <location>
        <begin position="67"/>
        <end position="87"/>
    </location>
</feature>
<feature type="topological domain" description="Extracellular" evidence="2">
    <location>
        <begin position="88"/>
        <end position="97"/>
    </location>
</feature>
<feature type="transmembrane region" description="Helical; Name=3" evidence="2">
    <location>
        <begin position="98"/>
        <end position="118"/>
    </location>
</feature>
<feature type="topological domain" description="Cytoplasmic" evidence="2">
    <location>
        <begin position="119"/>
        <end position="136"/>
    </location>
</feature>
<feature type="transmembrane region" description="Helical; Name=4" evidence="2">
    <location>
        <begin position="137"/>
        <end position="157"/>
    </location>
</feature>
<feature type="topological domain" description="Extracellular" evidence="2">
    <location>
        <begin position="158"/>
        <end position="189"/>
    </location>
</feature>
<feature type="transmembrane region" description="Helical; Name=5" evidence="2">
    <location>
        <begin position="190"/>
        <end position="210"/>
    </location>
</feature>
<feature type="topological domain" description="Cytoplasmic" evidence="2">
    <location>
        <begin position="211"/>
        <end position="251"/>
    </location>
</feature>
<feature type="transmembrane region" description="Helical; Name=6" evidence="2">
    <location>
        <begin position="252"/>
        <end position="272"/>
    </location>
</feature>
<feature type="topological domain" description="Extracellular" evidence="2">
    <location>
        <begin position="273"/>
        <end position="281"/>
    </location>
</feature>
<feature type="transmembrane region" description="Helical; Name=7" evidence="2">
    <location>
        <begin position="282"/>
        <end position="302"/>
    </location>
</feature>
<feature type="topological domain" description="Cytoplasmic" evidence="2">
    <location>
        <begin position="303"/>
        <end position="319"/>
    </location>
</feature>
<feature type="glycosylation site" description="N-linked (GlcNAc...) asparagine" evidence="2">
    <location>
        <position position="169"/>
    </location>
</feature>
<feature type="glycosylation site" description="N-linked (GlcNAc...) asparagine" evidence="2">
    <location>
        <position position="178"/>
    </location>
</feature>
<evidence type="ECO:0000250" key="1"/>
<evidence type="ECO:0000255" key="2"/>
<evidence type="ECO:0000305" key="3"/>
<evidence type="ECO:0000312" key="4">
    <source>
        <dbReference type="EMBL" id="AAN63043.1"/>
    </source>
</evidence>
<proteinExistence type="inferred from homology"/>
<dbReference type="EMBL" id="AY145468">
    <property type="protein sequence ID" value="AAN63043.1"/>
    <property type="molecule type" value="Genomic_DNA"/>
</dbReference>
<dbReference type="EMBL" id="AC155654">
    <property type="status" value="NOT_ANNOTATED_CDS"/>
    <property type="molecule type" value="Genomic_DNA"/>
</dbReference>
<dbReference type="EMBL" id="BK001095">
    <property type="protein sequence ID" value="DAA01234.1"/>
    <property type="molecule type" value="Genomic_DNA"/>
</dbReference>
<dbReference type="CCDS" id="CCDS20062.1"/>
<dbReference type="RefSeq" id="NP_001001453.1">
    <property type="nucleotide sequence ID" value="NM_001001453.1"/>
</dbReference>
<dbReference type="SMR" id="Q7TQB8"/>
<dbReference type="FunCoup" id="Q7TQB8">
    <property type="interactions" value="783"/>
</dbReference>
<dbReference type="STRING" id="10090.ENSMUSP00000067734"/>
<dbReference type="GlyCosmos" id="Q7TQB8">
    <property type="glycosylation" value="2 sites, No reported glycans"/>
</dbReference>
<dbReference type="GlyGen" id="Q7TQB8">
    <property type="glycosylation" value="2 sites"/>
</dbReference>
<dbReference type="PhosphoSitePlus" id="Q7TQB8"/>
<dbReference type="PaxDb" id="10090-ENSMUSP00000067734"/>
<dbReference type="Antibodypedia" id="32610">
    <property type="antibodies" value="18 antibodies from 10 providers"/>
</dbReference>
<dbReference type="DNASU" id="387515"/>
<dbReference type="Ensembl" id="ENSMUST00000063489.4">
    <property type="protein sequence ID" value="ENSMUSP00000067734.4"/>
    <property type="gene ID" value="ENSMUSG00000051917.4"/>
</dbReference>
<dbReference type="GeneID" id="387515"/>
<dbReference type="KEGG" id="mmu:387515"/>
<dbReference type="UCSC" id="uc009bqn.1">
    <property type="organism name" value="mouse"/>
</dbReference>
<dbReference type="AGR" id="MGI:2681312"/>
<dbReference type="CTD" id="387515"/>
<dbReference type="MGI" id="MGI:2681312">
    <property type="gene designation" value="Tas2r144"/>
</dbReference>
<dbReference type="VEuPathDB" id="HostDB:ENSMUSG00000051917"/>
<dbReference type="eggNOG" id="ENOG502SKRK">
    <property type="taxonomic scope" value="Eukaryota"/>
</dbReference>
<dbReference type="GeneTree" id="ENSGT01100000263477"/>
<dbReference type="HOGENOM" id="CLU_072337_3_0_1"/>
<dbReference type="InParanoid" id="Q7TQB8"/>
<dbReference type="OMA" id="NFTHPLF"/>
<dbReference type="OrthoDB" id="8876749at2759"/>
<dbReference type="PhylomeDB" id="Q7TQB8"/>
<dbReference type="TreeFam" id="TF335891"/>
<dbReference type="Reactome" id="R-MMU-418594">
    <property type="pathway name" value="G alpha (i) signalling events"/>
</dbReference>
<dbReference type="Reactome" id="R-MMU-420499">
    <property type="pathway name" value="Class C/3 (Metabotropic glutamate/pheromone receptors)"/>
</dbReference>
<dbReference type="Reactome" id="R-MMU-9717207">
    <property type="pathway name" value="Sensory perception of sweet, bitter, and umami (glutamate) taste"/>
</dbReference>
<dbReference type="BioGRID-ORCS" id="387515">
    <property type="hits" value="2 hits in 77 CRISPR screens"/>
</dbReference>
<dbReference type="PRO" id="PR:Q7TQB8"/>
<dbReference type="Proteomes" id="UP000000589">
    <property type="component" value="Chromosome 6"/>
</dbReference>
<dbReference type="RNAct" id="Q7TQB8">
    <property type="molecule type" value="protein"/>
</dbReference>
<dbReference type="GO" id="GO:0016020">
    <property type="term" value="C:membrane"/>
    <property type="evidence" value="ECO:0000303"/>
    <property type="project" value="UniProtKB"/>
</dbReference>
<dbReference type="GO" id="GO:0033038">
    <property type="term" value="F:bitter taste receptor activity"/>
    <property type="evidence" value="ECO:0007669"/>
    <property type="project" value="Ensembl"/>
</dbReference>
<dbReference type="GO" id="GO:0004930">
    <property type="term" value="F:G protein-coupled receptor activity"/>
    <property type="evidence" value="ECO:0007669"/>
    <property type="project" value="UniProtKB-KW"/>
</dbReference>
<dbReference type="GO" id="GO:0008527">
    <property type="term" value="F:taste receptor activity"/>
    <property type="evidence" value="ECO:0000303"/>
    <property type="project" value="UniProtKB"/>
</dbReference>
<dbReference type="GO" id="GO:0001580">
    <property type="term" value="P:detection of chemical stimulus involved in sensory perception of bitter taste"/>
    <property type="evidence" value="ECO:0000303"/>
    <property type="project" value="UniProtKB"/>
</dbReference>
<dbReference type="CDD" id="cd15014">
    <property type="entry name" value="7tm_TAS2R40"/>
    <property type="match status" value="1"/>
</dbReference>
<dbReference type="FunFam" id="1.20.1070.10:FF:000055">
    <property type="entry name" value="Taste receptor type 2"/>
    <property type="match status" value="1"/>
</dbReference>
<dbReference type="Gene3D" id="1.20.1070.10">
    <property type="entry name" value="Rhodopsin 7-helix transmembrane proteins"/>
    <property type="match status" value="1"/>
</dbReference>
<dbReference type="InterPro" id="IPR007960">
    <property type="entry name" value="TAS2R"/>
</dbReference>
<dbReference type="PANTHER" id="PTHR11394">
    <property type="entry name" value="TASTE RECEPTOR TYPE 2"/>
    <property type="match status" value="1"/>
</dbReference>
<dbReference type="PANTHER" id="PTHR11394:SF47">
    <property type="entry name" value="TASTE RECEPTOR TYPE 2 MEMBER 40"/>
    <property type="match status" value="1"/>
</dbReference>
<dbReference type="Pfam" id="PF05296">
    <property type="entry name" value="TAS2R"/>
    <property type="match status" value="1"/>
</dbReference>
<dbReference type="SUPFAM" id="SSF81321">
    <property type="entry name" value="Family A G protein-coupled receptor-like"/>
    <property type="match status" value="1"/>
</dbReference>
<comment type="function">
    <text evidence="1">Gustducin-coupled receptor implicated in the perception of bitter compounds in the oral cavity and the gastrointestinal tract. Signals through PLCB2 and the calcium-regulated cation channel TRPM5 (By similarity).</text>
</comment>
<comment type="subcellular location">
    <subcellularLocation>
        <location>Membrane</location>
        <topology>Multi-pass membrane protein</topology>
    </subcellularLocation>
</comment>
<comment type="miscellaneous">
    <text>Several bitter taste receptors are expressed in a single taste receptor cell.</text>
</comment>
<comment type="similarity">
    <text evidence="3">Belongs to the G-protein coupled receptor T2R family.</text>
</comment>
<protein>
    <recommendedName>
        <fullName>Taste receptor type 2 member 40</fullName>
        <shortName>T2R40</shortName>
        <shortName>mT2R33</shortName>
    </recommendedName>
</protein>
<accession>Q7TQB8</accession>
<name>T2R40_MOUSE</name>
<keyword id="KW-0297">G-protein coupled receptor</keyword>
<keyword id="KW-0325">Glycoprotein</keyword>
<keyword id="KW-0472">Membrane</keyword>
<keyword id="KW-0675">Receptor</keyword>
<keyword id="KW-1185">Reference proteome</keyword>
<keyword id="KW-0716">Sensory transduction</keyword>
<keyword id="KW-0919">Taste</keyword>
<keyword id="KW-0807">Transducer</keyword>
<keyword id="KW-0812">Transmembrane</keyword>
<keyword id="KW-1133">Transmembrane helix</keyword>
<reference evidence="4" key="1">
    <citation type="journal article" date="2003" name="Physiol. Genomics">
        <title>Evolutionary relationships of the Tas2r receptor gene families in mouse and human.</title>
        <authorList>
            <person name="Conte C."/>
            <person name="Ebeling M."/>
            <person name="Marcuz A."/>
            <person name="Nef P."/>
            <person name="Andres-Barquin P.J."/>
        </authorList>
    </citation>
    <scope>NUCLEOTIDE SEQUENCE [GENOMIC DNA]</scope>
    <source>
        <strain evidence="4">C57BL/6J</strain>
    </source>
</reference>
<reference key="2">
    <citation type="journal article" date="2009" name="PLoS Biol.">
        <title>Lineage-specific biology revealed by a finished genome assembly of the mouse.</title>
        <authorList>
            <person name="Church D.M."/>
            <person name="Goodstadt L."/>
            <person name="Hillier L.W."/>
            <person name="Zody M.C."/>
            <person name="Goldstein S."/>
            <person name="She X."/>
            <person name="Bult C.J."/>
            <person name="Agarwala R."/>
            <person name="Cherry J.L."/>
            <person name="DiCuccio M."/>
            <person name="Hlavina W."/>
            <person name="Kapustin Y."/>
            <person name="Meric P."/>
            <person name="Maglott D."/>
            <person name="Birtle Z."/>
            <person name="Marques A.C."/>
            <person name="Graves T."/>
            <person name="Zhou S."/>
            <person name="Teague B."/>
            <person name="Potamousis K."/>
            <person name="Churas C."/>
            <person name="Place M."/>
            <person name="Herschleb J."/>
            <person name="Runnheim R."/>
            <person name="Forrest D."/>
            <person name="Amos-Landgraf J."/>
            <person name="Schwartz D.C."/>
            <person name="Cheng Z."/>
            <person name="Lindblad-Toh K."/>
            <person name="Eichler E.E."/>
            <person name="Ponting C.P."/>
        </authorList>
    </citation>
    <scope>NUCLEOTIDE SEQUENCE [LARGE SCALE GENOMIC DNA]</scope>
    <source>
        <strain>C57BL/6J</strain>
    </source>
</reference>
<reference evidence="3" key="3">
    <citation type="journal article" date="2003" name="Mol. Biol. Evol.">
        <title>Adaptive diversification of bitter taste receptor genes in mammalian evolution.</title>
        <authorList>
            <person name="Shi P."/>
            <person name="Zhang J."/>
            <person name="Yang H."/>
            <person name="Zhang Y.-P."/>
        </authorList>
    </citation>
    <scope>IDENTIFICATION</scope>
</reference>
<gene>
    <name type="primary">Tas2r40</name>
    <name type="synonym">T2r33</name>
    <name type="synonym">Tas2r144</name>
    <name type="synonym">Tas2r44</name>
</gene>
<sequence length="319" mass="36559">MAIITTNSDYFAHRYEVIIPFVVSTICSIVGIIGNGFITVIYGTEWVRSKRLPTGENLMLMLSFSRLLLQIWMMVEITYSLLFPIIYNHNAMYKLFKAISVFLNYCNLWFAAWLNVFYCLKIVNLAHPLFLLMKQKIIGLMPRLLSLSVLVSFSLSSFFSKDILNVYVNTSVPIPSSNSTKMKYIFMINVLSLAFLYYMGIFLPLFMFIMAATLLITSLKRHTLHMENSTTGSRDSSMEAHVGAIKSTSHSLILYIINALALFISMSNILGAYSVWNSLCNIIMTAYPAGQSVHLILRNPGLRRAWRRFQHHVHLYLKR</sequence>
<organism evidence="4">
    <name type="scientific">Mus musculus</name>
    <name type="common">Mouse</name>
    <dbReference type="NCBI Taxonomy" id="10090"/>
    <lineage>
        <taxon>Eukaryota</taxon>
        <taxon>Metazoa</taxon>
        <taxon>Chordata</taxon>
        <taxon>Craniata</taxon>
        <taxon>Vertebrata</taxon>
        <taxon>Euteleostomi</taxon>
        <taxon>Mammalia</taxon>
        <taxon>Eutheria</taxon>
        <taxon>Euarchontoglires</taxon>
        <taxon>Glires</taxon>
        <taxon>Rodentia</taxon>
        <taxon>Myomorpha</taxon>
        <taxon>Muroidea</taxon>
        <taxon>Muridae</taxon>
        <taxon>Murinae</taxon>
        <taxon>Mus</taxon>
        <taxon>Mus</taxon>
    </lineage>
</organism>